<keyword id="KW-0249">Electron transport</keyword>
<keyword id="KW-0349">Heme</keyword>
<keyword id="KW-0408">Iron</keyword>
<keyword id="KW-0472">Membrane</keyword>
<keyword id="KW-0479">Metal-binding</keyword>
<keyword id="KW-0602">Photosynthesis</keyword>
<keyword id="KW-0604">Photosystem II</keyword>
<keyword id="KW-0793">Thylakoid</keyword>
<keyword id="KW-0812">Transmembrane</keyword>
<keyword id="KW-1133">Transmembrane helix</keyword>
<keyword id="KW-0813">Transport</keyword>
<comment type="function">
    <text evidence="1">This b-type cytochrome is tightly associated with the reaction center of photosystem II (PSII). PSII is a light-driven water:plastoquinone oxidoreductase that uses light energy to abstract electrons from H(2)O, generating O(2) and a proton gradient subsequently used for ATP formation. It consists of a core antenna complex that captures photons, and an electron transfer chain that converts photonic excitation into a charge separation.</text>
</comment>
<comment type="cofactor">
    <cofactor evidence="1">
        <name>heme b</name>
        <dbReference type="ChEBI" id="CHEBI:60344"/>
    </cofactor>
    <text evidence="1">With its partner (PsbE) binds heme. PSII binds additional chlorophylls, carotenoids and specific lipids.</text>
</comment>
<comment type="subunit">
    <text evidence="1">Heterodimer of an alpha subunit and a beta subunit. PSII is composed of 1 copy each of membrane proteins PsbA, PsbB, PsbC, PsbD, PsbE, PsbF, PsbH, PsbI, PsbJ, PsbK, PsbL, PsbM, PsbT, PsbX, PsbY, PsbZ, Psb30/Ycf12, peripheral proteins PsbO, CyanoQ (PsbQ), PsbU, PsbV and a large number of cofactors. It forms dimeric complexes.</text>
</comment>
<comment type="subcellular location">
    <subcellularLocation>
        <location evidence="1">Cellular thylakoid membrane</location>
        <topology evidence="1">Single-pass membrane protein</topology>
    </subcellularLocation>
</comment>
<comment type="similarity">
    <text evidence="1">Belongs to the PsbE/PsbF family.</text>
</comment>
<proteinExistence type="inferred from homology"/>
<sequence length="45" mass="5091">MSQTPVATTPRNYPIFTVRWLALHTLGVPTVFFLGALAAMQFIRR</sequence>
<reference key="1">
    <citation type="journal article" date="2003" name="Nature">
        <title>The genome of a motile marine Synechococcus.</title>
        <authorList>
            <person name="Palenik B."/>
            <person name="Brahamsha B."/>
            <person name="Larimer F.W."/>
            <person name="Land M.L."/>
            <person name="Hauser L."/>
            <person name="Chain P."/>
            <person name="Lamerdin J.E."/>
            <person name="Regala W."/>
            <person name="Allen E.E."/>
            <person name="McCarren J."/>
            <person name="Paulsen I.T."/>
            <person name="Dufresne A."/>
            <person name="Partensky F."/>
            <person name="Webb E.A."/>
            <person name="Waterbury J."/>
        </authorList>
    </citation>
    <scope>NUCLEOTIDE SEQUENCE [LARGE SCALE GENOMIC DNA]</scope>
    <source>
        <strain>WH8102</strain>
    </source>
</reference>
<evidence type="ECO:0000255" key="1">
    <source>
        <dbReference type="HAMAP-Rule" id="MF_00643"/>
    </source>
</evidence>
<accession>Q7U9Q0</accession>
<feature type="chain" id="PRO_0000200476" description="Cytochrome b559 subunit beta">
    <location>
        <begin position="1"/>
        <end position="45"/>
    </location>
</feature>
<feature type="transmembrane region" description="Helical" evidence="1">
    <location>
        <begin position="20"/>
        <end position="36"/>
    </location>
</feature>
<feature type="binding site" description="axial binding residue" evidence="1">
    <location>
        <position position="24"/>
    </location>
    <ligand>
        <name>heme</name>
        <dbReference type="ChEBI" id="CHEBI:30413"/>
        <note>ligand shared with alpha subunit</note>
    </ligand>
    <ligandPart>
        <name>Fe</name>
        <dbReference type="ChEBI" id="CHEBI:18248"/>
    </ligandPart>
</feature>
<dbReference type="EMBL" id="BX569689">
    <property type="protein sequence ID" value="CAE06718.1"/>
    <property type="molecule type" value="Genomic_DNA"/>
</dbReference>
<dbReference type="RefSeq" id="WP_011127079.1">
    <property type="nucleotide sequence ID" value="NC_005070.1"/>
</dbReference>
<dbReference type="SMR" id="Q7U9Q0"/>
<dbReference type="STRING" id="84588.SYNW0203"/>
<dbReference type="KEGG" id="syw:SYNW0203"/>
<dbReference type="eggNOG" id="ENOG50332KX">
    <property type="taxonomic scope" value="Bacteria"/>
</dbReference>
<dbReference type="HOGENOM" id="CLU_211753_1_0_3"/>
<dbReference type="BioCyc" id="MetaCyc:TX72_RS01010-MONOMER"/>
<dbReference type="Proteomes" id="UP000001422">
    <property type="component" value="Chromosome"/>
</dbReference>
<dbReference type="GO" id="GO:0009539">
    <property type="term" value="C:photosystem II reaction center"/>
    <property type="evidence" value="ECO:0007669"/>
    <property type="project" value="InterPro"/>
</dbReference>
<dbReference type="GO" id="GO:0031676">
    <property type="term" value="C:plasma membrane-derived thylakoid membrane"/>
    <property type="evidence" value="ECO:0007669"/>
    <property type="project" value="UniProtKB-SubCell"/>
</dbReference>
<dbReference type="GO" id="GO:0009055">
    <property type="term" value="F:electron transfer activity"/>
    <property type="evidence" value="ECO:0007669"/>
    <property type="project" value="UniProtKB-UniRule"/>
</dbReference>
<dbReference type="GO" id="GO:0020037">
    <property type="term" value="F:heme binding"/>
    <property type="evidence" value="ECO:0007669"/>
    <property type="project" value="InterPro"/>
</dbReference>
<dbReference type="GO" id="GO:0005506">
    <property type="term" value="F:iron ion binding"/>
    <property type="evidence" value="ECO:0007669"/>
    <property type="project" value="UniProtKB-UniRule"/>
</dbReference>
<dbReference type="GO" id="GO:0009767">
    <property type="term" value="P:photosynthetic electron transport chain"/>
    <property type="evidence" value="ECO:0007669"/>
    <property type="project" value="InterPro"/>
</dbReference>
<dbReference type="HAMAP" id="MF_00643">
    <property type="entry name" value="PSII_PsbF"/>
    <property type="match status" value="1"/>
</dbReference>
<dbReference type="InterPro" id="IPR006241">
    <property type="entry name" value="PSII_cyt_b559_bsu"/>
</dbReference>
<dbReference type="InterPro" id="IPR006216">
    <property type="entry name" value="PSII_cyt_b559_CS"/>
</dbReference>
<dbReference type="InterPro" id="IPR013081">
    <property type="entry name" value="PSII_cyt_b559_N"/>
</dbReference>
<dbReference type="NCBIfam" id="TIGR01333">
    <property type="entry name" value="cyt_b559_beta"/>
    <property type="match status" value="1"/>
</dbReference>
<dbReference type="Pfam" id="PF00283">
    <property type="entry name" value="Cytochrom_B559"/>
    <property type="match status" value="1"/>
</dbReference>
<dbReference type="PIRSF" id="PIRSF000037">
    <property type="entry name" value="PsbF"/>
    <property type="match status" value="1"/>
</dbReference>
<dbReference type="SUPFAM" id="SSF161045">
    <property type="entry name" value="Cytochrome b559 subunits"/>
    <property type="match status" value="1"/>
</dbReference>
<dbReference type="PROSITE" id="PS00537">
    <property type="entry name" value="CYTOCHROME_B559"/>
    <property type="match status" value="1"/>
</dbReference>
<protein>
    <recommendedName>
        <fullName evidence="1">Cytochrome b559 subunit beta</fullName>
    </recommendedName>
    <alternativeName>
        <fullName evidence="1">PSII reaction center subunit VI</fullName>
    </alternativeName>
</protein>
<gene>
    <name evidence="1" type="primary">psbF</name>
    <name type="ordered locus">SYNW0203</name>
</gene>
<organism>
    <name type="scientific">Parasynechococcus marenigrum (strain WH8102)</name>
    <dbReference type="NCBI Taxonomy" id="84588"/>
    <lineage>
        <taxon>Bacteria</taxon>
        <taxon>Bacillati</taxon>
        <taxon>Cyanobacteriota</taxon>
        <taxon>Cyanophyceae</taxon>
        <taxon>Synechococcales</taxon>
        <taxon>Prochlorococcaceae</taxon>
        <taxon>Parasynechococcus</taxon>
        <taxon>Parasynechococcus marenigrum</taxon>
    </lineage>
</organism>
<name>PSBF_PARMW</name>